<protein>
    <recommendedName>
        <fullName evidence="1">Large ribosomal subunit protein uL22</fullName>
    </recommendedName>
    <alternativeName>
        <fullName evidence="2">50S ribosomal protein L22</fullName>
    </alternativeName>
</protein>
<proteinExistence type="inferred from homology"/>
<evidence type="ECO:0000255" key="1">
    <source>
        <dbReference type="HAMAP-Rule" id="MF_01331"/>
    </source>
</evidence>
<evidence type="ECO:0000305" key="2"/>
<accession>A8GYY1</accession>
<gene>
    <name evidence="1" type="primary">rplV</name>
    <name type="ordered locus">Spea_0189</name>
</gene>
<sequence length="110" mass="12151">MEVLAKHRFARTSPQKCRLVADQIRGLPVAKALEILTFSPKKAAVLVKKVLDSAIANAEHNEGADIDELRVGAIMIDEGPTMKRIMPRAKGRADRIIKRTSHITVVVSDR</sequence>
<feature type="chain" id="PRO_1000086571" description="Large ribosomal subunit protein uL22">
    <location>
        <begin position="1"/>
        <end position="110"/>
    </location>
</feature>
<reference key="1">
    <citation type="submission" date="2007-10" db="EMBL/GenBank/DDBJ databases">
        <title>Complete sequence of Shewanella pealeana ATCC 700345.</title>
        <authorList>
            <consortium name="US DOE Joint Genome Institute"/>
            <person name="Copeland A."/>
            <person name="Lucas S."/>
            <person name="Lapidus A."/>
            <person name="Barry K."/>
            <person name="Glavina del Rio T."/>
            <person name="Dalin E."/>
            <person name="Tice H."/>
            <person name="Pitluck S."/>
            <person name="Chertkov O."/>
            <person name="Brettin T."/>
            <person name="Bruce D."/>
            <person name="Detter J.C."/>
            <person name="Han C."/>
            <person name="Schmutz J."/>
            <person name="Larimer F."/>
            <person name="Land M."/>
            <person name="Hauser L."/>
            <person name="Kyrpides N."/>
            <person name="Kim E."/>
            <person name="Zhao J.-S.Z."/>
            <person name="Manno D."/>
            <person name="Hawari J."/>
            <person name="Richardson P."/>
        </authorList>
    </citation>
    <scope>NUCLEOTIDE SEQUENCE [LARGE SCALE GENOMIC DNA]</scope>
    <source>
        <strain>ATCC 700345 / ANG-SQ1</strain>
    </source>
</reference>
<keyword id="KW-1185">Reference proteome</keyword>
<keyword id="KW-0687">Ribonucleoprotein</keyword>
<keyword id="KW-0689">Ribosomal protein</keyword>
<keyword id="KW-0694">RNA-binding</keyword>
<keyword id="KW-0699">rRNA-binding</keyword>
<comment type="function">
    <text evidence="1">This protein binds specifically to 23S rRNA; its binding is stimulated by other ribosomal proteins, e.g. L4, L17, and L20. It is important during the early stages of 50S assembly. It makes multiple contacts with different domains of the 23S rRNA in the assembled 50S subunit and ribosome (By similarity).</text>
</comment>
<comment type="function">
    <text evidence="1">The globular domain of the protein is located near the polypeptide exit tunnel on the outside of the subunit, while an extended beta-hairpin is found that lines the wall of the exit tunnel in the center of the 70S ribosome.</text>
</comment>
<comment type="subunit">
    <text evidence="1">Part of the 50S ribosomal subunit.</text>
</comment>
<comment type="similarity">
    <text evidence="1">Belongs to the universal ribosomal protein uL22 family.</text>
</comment>
<dbReference type="EMBL" id="CP000851">
    <property type="protein sequence ID" value="ABV85518.1"/>
    <property type="molecule type" value="Genomic_DNA"/>
</dbReference>
<dbReference type="RefSeq" id="WP_012144645.1">
    <property type="nucleotide sequence ID" value="NC_009901.1"/>
</dbReference>
<dbReference type="SMR" id="A8GYY1"/>
<dbReference type="STRING" id="398579.Spea_0189"/>
<dbReference type="KEGG" id="spl:Spea_0189"/>
<dbReference type="eggNOG" id="COG0091">
    <property type="taxonomic scope" value="Bacteria"/>
</dbReference>
<dbReference type="HOGENOM" id="CLU_083987_3_3_6"/>
<dbReference type="OrthoDB" id="9805969at2"/>
<dbReference type="Proteomes" id="UP000002608">
    <property type="component" value="Chromosome"/>
</dbReference>
<dbReference type="GO" id="GO:0022625">
    <property type="term" value="C:cytosolic large ribosomal subunit"/>
    <property type="evidence" value="ECO:0007669"/>
    <property type="project" value="TreeGrafter"/>
</dbReference>
<dbReference type="GO" id="GO:0019843">
    <property type="term" value="F:rRNA binding"/>
    <property type="evidence" value="ECO:0007669"/>
    <property type="project" value="UniProtKB-UniRule"/>
</dbReference>
<dbReference type="GO" id="GO:0003735">
    <property type="term" value="F:structural constituent of ribosome"/>
    <property type="evidence" value="ECO:0007669"/>
    <property type="project" value="InterPro"/>
</dbReference>
<dbReference type="GO" id="GO:0006412">
    <property type="term" value="P:translation"/>
    <property type="evidence" value="ECO:0007669"/>
    <property type="project" value="UniProtKB-UniRule"/>
</dbReference>
<dbReference type="CDD" id="cd00336">
    <property type="entry name" value="Ribosomal_L22"/>
    <property type="match status" value="1"/>
</dbReference>
<dbReference type="FunFam" id="3.90.470.10:FF:000001">
    <property type="entry name" value="50S ribosomal protein L22"/>
    <property type="match status" value="1"/>
</dbReference>
<dbReference type="Gene3D" id="3.90.470.10">
    <property type="entry name" value="Ribosomal protein L22/L17"/>
    <property type="match status" value="1"/>
</dbReference>
<dbReference type="HAMAP" id="MF_01331_B">
    <property type="entry name" value="Ribosomal_uL22_B"/>
    <property type="match status" value="1"/>
</dbReference>
<dbReference type="InterPro" id="IPR001063">
    <property type="entry name" value="Ribosomal_uL22"/>
</dbReference>
<dbReference type="InterPro" id="IPR005727">
    <property type="entry name" value="Ribosomal_uL22_bac/chlpt-type"/>
</dbReference>
<dbReference type="InterPro" id="IPR047867">
    <property type="entry name" value="Ribosomal_uL22_bac/org-type"/>
</dbReference>
<dbReference type="InterPro" id="IPR018260">
    <property type="entry name" value="Ribosomal_uL22_CS"/>
</dbReference>
<dbReference type="InterPro" id="IPR036394">
    <property type="entry name" value="Ribosomal_uL22_sf"/>
</dbReference>
<dbReference type="NCBIfam" id="TIGR01044">
    <property type="entry name" value="rplV_bact"/>
    <property type="match status" value="1"/>
</dbReference>
<dbReference type="PANTHER" id="PTHR13501">
    <property type="entry name" value="CHLOROPLAST 50S RIBOSOMAL PROTEIN L22-RELATED"/>
    <property type="match status" value="1"/>
</dbReference>
<dbReference type="PANTHER" id="PTHR13501:SF8">
    <property type="entry name" value="LARGE RIBOSOMAL SUBUNIT PROTEIN UL22M"/>
    <property type="match status" value="1"/>
</dbReference>
<dbReference type="Pfam" id="PF00237">
    <property type="entry name" value="Ribosomal_L22"/>
    <property type="match status" value="1"/>
</dbReference>
<dbReference type="SUPFAM" id="SSF54843">
    <property type="entry name" value="Ribosomal protein L22"/>
    <property type="match status" value="1"/>
</dbReference>
<dbReference type="PROSITE" id="PS00464">
    <property type="entry name" value="RIBOSOMAL_L22"/>
    <property type="match status" value="1"/>
</dbReference>
<name>RL22_SHEPA</name>
<organism>
    <name type="scientific">Shewanella pealeana (strain ATCC 700345 / ANG-SQ1)</name>
    <dbReference type="NCBI Taxonomy" id="398579"/>
    <lineage>
        <taxon>Bacteria</taxon>
        <taxon>Pseudomonadati</taxon>
        <taxon>Pseudomonadota</taxon>
        <taxon>Gammaproteobacteria</taxon>
        <taxon>Alteromonadales</taxon>
        <taxon>Shewanellaceae</taxon>
        <taxon>Shewanella</taxon>
    </lineage>
</organism>